<sequence length="139" mass="15655">MRIMGLDVGSKTVGVAISDPLGFTAQGLEIIQINEEQGQFGFDRVKELVDTYKVERFVVGLPKNMNNTSGPRVEASQAYGAKLEEFFGLPVDYQDERLTTVAAERMLIEQADISRNKRKKVIDKLAAQLILQNYLDRKF</sequence>
<accession>B1I8I5</accession>
<evidence type="ECO:0000255" key="1">
    <source>
        <dbReference type="HAMAP-Rule" id="MF_00651"/>
    </source>
</evidence>
<feature type="chain" id="PRO_1000131076" description="Putative pre-16S rRNA nuclease">
    <location>
        <begin position="1"/>
        <end position="139"/>
    </location>
</feature>
<gene>
    <name type="ordered locus">SPH_0310</name>
</gene>
<reference key="1">
    <citation type="journal article" date="2010" name="Genome Biol.">
        <title>Structure and dynamics of the pan-genome of Streptococcus pneumoniae and closely related species.</title>
        <authorList>
            <person name="Donati C."/>
            <person name="Hiller N.L."/>
            <person name="Tettelin H."/>
            <person name="Muzzi A."/>
            <person name="Croucher N.J."/>
            <person name="Angiuoli S.V."/>
            <person name="Oggioni M."/>
            <person name="Dunning Hotopp J.C."/>
            <person name="Hu F.Z."/>
            <person name="Riley D.R."/>
            <person name="Covacci A."/>
            <person name="Mitchell T.J."/>
            <person name="Bentley S.D."/>
            <person name="Kilian M."/>
            <person name="Ehrlich G.D."/>
            <person name="Rappuoli R."/>
            <person name="Moxon E.R."/>
            <person name="Masignani V."/>
        </authorList>
    </citation>
    <scope>NUCLEOTIDE SEQUENCE [LARGE SCALE GENOMIC DNA]</scope>
    <source>
        <strain>Hungary19A-6</strain>
    </source>
</reference>
<protein>
    <recommendedName>
        <fullName evidence="1">Putative pre-16S rRNA nuclease</fullName>
        <ecNumber evidence="1">3.1.-.-</ecNumber>
    </recommendedName>
</protein>
<name>YQGF_STRPI</name>
<dbReference type="EC" id="3.1.-.-" evidence="1"/>
<dbReference type="EMBL" id="CP000936">
    <property type="protein sequence ID" value="ACA37572.1"/>
    <property type="molecule type" value="Genomic_DNA"/>
</dbReference>
<dbReference type="SMR" id="B1I8I5"/>
<dbReference type="KEGG" id="spv:SPH_0310"/>
<dbReference type="HOGENOM" id="CLU_098240_2_0_9"/>
<dbReference type="Proteomes" id="UP000002163">
    <property type="component" value="Chromosome"/>
</dbReference>
<dbReference type="GO" id="GO:0005829">
    <property type="term" value="C:cytosol"/>
    <property type="evidence" value="ECO:0007669"/>
    <property type="project" value="TreeGrafter"/>
</dbReference>
<dbReference type="GO" id="GO:0004518">
    <property type="term" value="F:nuclease activity"/>
    <property type="evidence" value="ECO:0007669"/>
    <property type="project" value="UniProtKB-KW"/>
</dbReference>
<dbReference type="GO" id="GO:0000967">
    <property type="term" value="P:rRNA 5'-end processing"/>
    <property type="evidence" value="ECO:0007669"/>
    <property type="project" value="UniProtKB-UniRule"/>
</dbReference>
<dbReference type="CDD" id="cd16964">
    <property type="entry name" value="YqgF"/>
    <property type="match status" value="1"/>
</dbReference>
<dbReference type="FunFam" id="3.30.420.140:FF:000003">
    <property type="entry name" value="Putative pre-16S rRNA nuclease"/>
    <property type="match status" value="1"/>
</dbReference>
<dbReference type="Gene3D" id="3.30.420.140">
    <property type="entry name" value="YqgF/RNase H-like domain"/>
    <property type="match status" value="1"/>
</dbReference>
<dbReference type="HAMAP" id="MF_00651">
    <property type="entry name" value="Nuclease_YqgF"/>
    <property type="match status" value="1"/>
</dbReference>
<dbReference type="InterPro" id="IPR012337">
    <property type="entry name" value="RNaseH-like_sf"/>
</dbReference>
<dbReference type="InterPro" id="IPR005227">
    <property type="entry name" value="YqgF"/>
</dbReference>
<dbReference type="InterPro" id="IPR006641">
    <property type="entry name" value="YqgF/RNaseH-like_dom"/>
</dbReference>
<dbReference type="InterPro" id="IPR037027">
    <property type="entry name" value="YqgF/RNaseH-like_dom_sf"/>
</dbReference>
<dbReference type="NCBIfam" id="TIGR00250">
    <property type="entry name" value="RNAse_H_YqgF"/>
    <property type="match status" value="1"/>
</dbReference>
<dbReference type="PANTHER" id="PTHR33317">
    <property type="entry name" value="POLYNUCLEOTIDYL TRANSFERASE, RIBONUCLEASE H-LIKE SUPERFAMILY PROTEIN"/>
    <property type="match status" value="1"/>
</dbReference>
<dbReference type="PANTHER" id="PTHR33317:SF4">
    <property type="entry name" value="POLYNUCLEOTIDYL TRANSFERASE, RIBONUCLEASE H-LIKE SUPERFAMILY PROTEIN"/>
    <property type="match status" value="1"/>
</dbReference>
<dbReference type="Pfam" id="PF03652">
    <property type="entry name" value="RuvX"/>
    <property type="match status" value="1"/>
</dbReference>
<dbReference type="SMART" id="SM00732">
    <property type="entry name" value="YqgFc"/>
    <property type="match status" value="1"/>
</dbReference>
<dbReference type="SUPFAM" id="SSF53098">
    <property type="entry name" value="Ribonuclease H-like"/>
    <property type="match status" value="1"/>
</dbReference>
<proteinExistence type="inferred from homology"/>
<comment type="function">
    <text evidence="1">Could be a nuclease involved in processing of the 5'-end of pre-16S rRNA.</text>
</comment>
<comment type="subcellular location">
    <subcellularLocation>
        <location evidence="1">Cytoplasm</location>
    </subcellularLocation>
</comment>
<comment type="similarity">
    <text evidence="1">Belongs to the YqgF nuclease family.</text>
</comment>
<organism>
    <name type="scientific">Streptococcus pneumoniae (strain Hungary19A-6)</name>
    <dbReference type="NCBI Taxonomy" id="487214"/>
    <lineage>
        <taxon>Bacteria</taxon>
        <taxon>Bacillati</taxon>
        <taxon>Bacillota</taxon>
        <taxon>Bacilli</taxon>
        <taxon>Lactobacillales</taxon>
        <taxon>Streptococcaceae</taxon>
        <taxon>Streptococcus</taxon>
    </lineage>
</organism>
<keyword id="KW-0963">Cytoplasm</keyword>
<keyword id="KW-0378">Hydrolase</keyword>
<keyword id="KW-0540">Nuclease</keyword>
<keyword id="KW-0690">Ribosome biogenesis</keyword>